<comment type="function">
    <text>Hydrolyzes indole-3-acetamide (IAM) into indole-3-acetic acid (IAA).</text>
</comment>
<comment type="pathway">
    <text>Plant hormone metabolism; auxin biosynthesis.</text>
</comment>
<comment type="similarity">
    <text evidence="2">Belongs to the amidase family.</text>
</comment>
<keyword id="KW-0073">Auxin biosynthesis</keyword>
<keyword id="KW-0378">Hydrolase</keyword>
<sequence length="460" mass="49331">MYRKQPLESLCRDLRNGTVSAAEIREQALSAEARLKHLNCFIRDGDAEEQFSKASDAFKGGALWGIPVSFKDNICVKDLPVTAGTPGMTGCIATHDAFIVKKLKSLGAVVAGKNNMHELSFGITSVNVQWGTAGNPAAPGYCAGGSSGGCVSRPWSAGLYRSPSDTGGSVRIPAAFCGIAGFRPTTGRWASSGIIPVSHTKDAPGLLTRTVKDAAFLYGLISGSNTGEPSCEVRKLPCRVGLPASLWTGLDDHVERACFTAIRRMQDAGFDCVELDDGGIYALNETLTFTIPLYEFFTDFPRALLGLGWEQKIDAVFSHIADPHVRKIIHAHLAEELISRAEAASAVRDIGRLRLQMNALFQRQNIGLLAYPRHRVTSPCQVPPLSHVTGRSFFAEVIVNTDLASNAALPSVSLPVAPPGALPVGLSFDAPTGQDLFLLKTAAHIEMLLGTSEPDIRTYW</sequence>
<gene>
    <name type="primary">iaaH</name>
</gene>
<proteinExistence type="inferred from homology"/>
<organism>
    <name type="scientific">Pantoea agglomerans pv. gypsophilae</name>
    <name type="common">Erwinia herbicola</name>
    <dbReference type="NCBI Taxonomy" id="48984"/>
    <lineage>
        <taxon>Bacteria</taxon>
        <taxon>Pseudomonadati</taxon>
        <taxon>Pseudomonadota</taxon>
        <taxon>Gammaproteobacteria</taxon>
        <taxon>Enterobacterales</taxon>
        <taxon>Erwiniaceae</taxon>
        <taxon>Pantoea</taxon>
        <taxon>Pantoea agglomerans group</taxon>
    </lineage>
</organism>
<evidence type="ECO:0000250" key="1"/>
<evidence type="ECO:0000305" key="2"/>
<name>HYIN_PANAY</name>
<reference key="1">
    <citation type="submission" date="1995-11" db="EMBL/GenBank/DDBJ databases">
        <authorList>
            <person name="Ophir Y."/>
            <person name="Kunik T."/>
            <person name="Manulis S.M."/>
            <person name="Lichter A.L."/>
            <person name="Barash I.B."/>
            <person name="Gafni Y."/>
        </authorList>
    </citation>
    <scope>NUCLEOTIDE SEQUENCE [GENOMIC DNA]</scope>
    <source>
        <strain>PD713</strain>
    </source>
</reference>
<dbReference type="EC" id="3.5.1.-"/>
<dbReference type="EMBL" id="L33866">
    <property type="protein sequence ID" value="AAC17186.1"/>
    <property type="molecule type" value="Genomic_DNA"/>
</dbReference>
<dbReference type="SMR" id="Q47860"/>
<dbReference type="UniPathway" id="UPA00151"/>
<dbReference type="GO" id="GO:0016787">
    <property type="term" value="F:hydrolase activity"/>
    <property type="evidence" value="ECO:0007669"/>
    <property type="project" value="UniProtKB-KW"/>
</dbReference>
<dbReference type="GO" id="GO:0009851">
    <property type="term" value="P:auxin biosynthetic process"/>
    <property type="evidence" value="ECO:0007669"/>
    <property type="project" value="UniProtKB-UniPathway"/>
</dbReference>
<dbReference type="Gene3D" id="3.90.1300.10">
    <property type="entry name" value="Amidase signature (AS) domain"/>
    <property type="match status" value="1"/>
</dbReference>
<dbReference type="InterPro" id="IPR000120">
    <property type="entry name" value="Amidase"/>
</dbReference>
<dbReference type="InterPro" id="IPR023631">
    <property type="entry name" value="Amidase_dom"/>
</dbReference>
<dbReference type="InterPro" id="IPR036928">
    <property type="entry name" value="AS_sf"/>
</dbReference>
<dbReference type="PANTHER" id="PTHR11895:SF151">
    <property type="entry name" value="GLUTAMYL-TRNA(GLN) AMIDOTRANSFERASE SUBUNIT A"/>
    <property type="match status" value="1"/>
</dbReference>
<dbReference type="PANTHER" id="PTHR11895">
    <property type="entry name" value="TRANSAMIDASE"/>
    <property type="match status" value="1"/>
</dbReference>
<dbReference type="Pfam" id="PF01425">
    <property type="entry name" value="Amidase"/>
    <property type="match status" value="1"/>
</dbReference>
<dbReference type="SUPFAM" id="SSF75304">
    <property type="entry name" value="Amidase signature (AS) enzymes"/>
    <property type="match status" value="1"/>
</dbReference>
<accession>Q47860</accession>
<feature type="chain" id="PRO_0000105248" description="Indoleacetamide hydrolase">
    <location>
        <begin position="1"/>
        <end position="460"/>
    </location>
</feature>
<feature type="active site" description="Charge relay system" evidence="1">
    <location>
        <position position="71"/>
    </location>
</feature>
<feature type="active site" description="Charge relay system" evidence="1">
    <location>
        <position position="146"/>
    </location>
</feature>
<feature type="active site" description="Acyl-ester intermediate" evidence="1">
    <location>
        <position position="169"/>
    </location>
</feature>
<protein>
    <recommendedName>
        <fullName>Indoleacetamide hydrolase</fullName>
        <shortName>IAH</shortName>
        <ecNumber>3.5.1.-</ecNumber>
    </recommendedName>
    <alternativeName>
        <fullName>Indole-3-acetamide hydrolase</fullName>
    </alternativeName>
</protein>